<keyword id="KW-1185">Reference proteome</keyword>
<name>Y109_PASMU</name>
<reference key="1">
    <citation type="journal article" date="2001" name="Proc. Natl. Acad. Sci. U.S.A.">
        <title>Complete genomic sequence of Pasteurella multocida Pm70.</title>
        <authorList>
            <person name="May B.J."/>
            <person name="Zhang Q."/>
            <person name="Li L.L."/>
            <person name="Paustian M.L."/>
            <person name="Whittam T.S."/>
            <person name="Kapur V."/>
        </authorList>
    </citation>
    <scope>NUCLEOTIDE SEQUENCE [LARGE SCALE GENOMIC DNA]</scope>
    <source>
        <strain>Pm70</strain>
    </source>
</reference>
<protein>
    <recommendedName>
        <fullName>Uncharacterized protein PM0109</fullName>
    </recommendedName>
</protein>
<proteinExistence type="predicted"/>
<organism>
    <name type="scientific">Pasteurella multocida (strain Pm70)</name>
    <dbReference type="NCBI Taxonomy" id="272843"/>
    <lineage>
        <taxon>Bacteria</taxon>
        <taxon>Pseudomonadati</taxon>
        <taxon>Pseudomonadota</taxon>
        <taxon>Gammaproteobacteria</taxon>
        <taxon>Pasteurellales</taxon>
        <taxon>Pasteurellaceae</taxon>
        <taxon>Pasteurella</taxon>
    </lineage>
</organism>
<dbReference type="EMBL" id="AE004439">
    <property type="protein sequence ID" value="AAK02193.1"/>
    <property type="molecule type" value="Genomic_DNA"/>
</dbReference>
<dbReference type="RefSeq" id="WP_010906487.1">
    <property type="nucleotide sequence ID" value="NC_002663.1"/>
</dbReference>
<dbReference type="SMR" id="Q9CPD8"/>
<dbReference type="STRING" id="272843.PM0109"/>
<dbReference type="EnsemblBacteria" id="AAK02193">
    <property type="protein sequence ID" value="AAK02193"/>
    <property type="gene ID" value="PM0109"/>
</dbReference>
<dbReference type="KEGG" id="pmu:PM0109"/>
<dbReference type="PATRIC" id="fig|272843.6.peg.113"/>
<dbReference type="HOGENOM" id="CLU_1331032_0_0_6"/>
<dbReference type="OrthoDB" id="6866176at2"/>
<dbReference type="Proteomes" id="UP000000809">
    <property type="component" value="Chromosome"/>
</dbReference>
<gene>
    <name type="ordered locus">PM0109</name>
</gene>
<accession>Q9CPD8</accession>
<sequence length="203" mass="24425">MSHNELNLALLDVRKAYRLLADYQQRVIELLDFIKNELNAEHYYHYMDRYDSRSVYKIYTDQEAGLKLLPMRDMNLLWHRTRNIPDGEYWQNNISKDDLVFDVNIVSDEDSTLSVEESNSELHIYIYSCIKYKRNKNWYEDLWLKFDYPEFNQVSIFEDEKLGIKYQVYGEKLNLADLYDKESVKNILHGLKDRASKALNQKI</sequence>
<feature type="chain" id="PRO_0000216285" description="Uncharacterized protein PM0109">
    <location>
        <begin position="1"/>
        <end position="203"/>
    </location>
</feature>